<proteinExistence type="evidence at transcript level"/>
<reference key="1">
    <citation type="journal article" date="2007" name="Mol. Biol. Rep.">
        <title>Isolation, sequence analysis and expression profile of a novel porcine gene, NIP7, differentially expressed in the Longissimus dorsi muscle tissues from Meishan, Meishan x Large White cross and Large White pigs.</title>
        <authorList>
            <person name="Liu G.Y."/>
            <person name="Xiong Y.Z."/>
        </authorList>
    </citation>
    <scope>NUCLEOTIDE SEQUENCE [GENOMIC DNA / MRNA]</scope>
    <scope>TISSUE SPECIFICITY</scope>
</reference>
<dbReference type="EMBL" id="AY864609">
    <property type="protein sequence ID" value="AAX77005.1"/>
    <property type="molecule type" value="mRNA"/>
</dbReference>
<dbReference type="EMBL" id="AY974338">
    <property type="protein sequence ID" value="AAX85685.1"/>
    <property type="molecule type" value="Genomic_DNA"/>
</dbReference>
<dbReference type="RefSeq" id="NP_001041536.1">
    <property type="nucleotide sequence ID" value="NM_001048071.1"/>
</dbReference>
<dbReference type="SMR" id="Q56P27"/>
<dbReference type="FunCoup" id="Q56P27">
    <property type="interactions" value="2061"/>
</dbReference>
<dbReference type="STRING" id="9823.ENSSSCP00000067928"/>
<dbReference type="PaxDb" id="9823-ENSSSCP00000002978"/>
<dbReference type="Ensembl" id="ENSSSCT00000076241.2">
    <property type="protein sequence ID" value="ENSSSCP00000061779.1"/>
    <property type="gene ID" value="ENSSSCG00000033741.3"/>
</dbReference>
<dbReference type="Ensembl" id="ENSSSCT00025069003.1">
    <property type="protein sequence ID" value="ENSSSCP00025029718.1"/>
    <property type="gene ID" value="ENSSSCG00025050504.1"/>
</dbReference>
<dbReference type="Ensembl" id="ENSSSCT00030087047.1">
    <property type="protein sequence ID" value="ENSSSCP00030040174.1"/>
    <property type="gene ID" value="ENSSSCG00030062234.1"/>
</dbReference>
<dbReference type="Ensembl" id="ENSSSCT00035076402.1">
    <property type="protein sequence ID" value="ENSSSCP00035031216.1"/>
    <property type="gene ID" value="ENSSSCG00035057120.1"/>
</dbReference>
<dbReference type="Ensembl" id="ENSSSCT00040021479.1">
    <property type="protein sequence ID" value="ENSSSCP00040008976.1"/>
    <property type="gene ID" value="ENSSSCG00040015962.1"/>
</dbReference>
<dbReference type="Ensembl" id="ENSSSCT00045047518.1">
    <property type="protein sequence ID" value="ENSSSCP00045032991.1"/>
    <property type="gene ID" value="ENSSSCG00045027853.1"/>
</dbReference>
<dbReference type="Ensembl" id="ENSSSCT00050012074.1">
    <property type="protein sequence ID" value="ENSSSCP00050005062.1"/>
    <property type="gene ID" value="ENSSSCG00050008921.1"/>
</dbReference>
<dbReference type="Ensembl" id="ENSSSCT00055008016.1">
    <property type="protein sequence ID" value="ENSSSCP00055006344.1"/>
    <property type="gene ID" value="ENSSSCG00055004069.1"/>
</dbReference>
<dbReference type="Ensembl" id="ENSSSCT00060018900.1">
    <property type="protein sequence ID" value="ENSSSCP00060007622.1"/>
    <property type="gene ID" value="ENSSSCG00060014292.1"/>
</dbReference>
<dbReference type="Ensembl" id="ENSSSCT00065069157.1">
    <property type="protein sequence ID" value="ENSSSCP00065030119.1"/>
    <property type="gene ID" value="ENSSSCG00065050489.1"/>
</dbReference>
<dbReference type="Ensembl" id="ENSSSCT00070000975.1">
    <property type="protein sequence ID" value="ENSSSCP00070000852.1"/>
    <property type="gene ID" value="ENSSSCG00070000519.1"/>
</dbReference>
<dbReference type="Ensembl" id="ENSSSCT00105061290">
    <property type="protein sequence ID" value="ENSSSCP00105043568"/>
    <property type="gene ID" value="ENSSSCG00105032166"/>
</dbReference>
<dbReference type="Ensembl" id="ENSSSCT00110049388">
    <property type="protein sequence ID" value="ENSSSCP00110034746"/>
    <property type="gene ID" value="ENSSSCG00110025609"/>
</dbReference>
<dbReference type="Ensembl" id="ENSSSCT00115020733">
    <property type="protein sequence ID" value="ENSSSCP00115019631"/>
    <property type="gene ID" value="ENSSSCG00115012000"/>
</dbReference>
<dbReference type="Ensembl" id="ENSSSCT00130015787">
    <property type="protein sequence ID" value="ENSSSCP00130010667"/>
    <property type="gene ID" value="ENSSSCG00130008538"/>
</dbReference>
<dbReference type="GeneID" id="595107"/>
<dbReference type="KEGG" id="ssc:595107"/>
<dbReference type="CTD" id="51388"/>
<dbReference type="VGNC" id="VGNC:90747">
    <property type="gene designation" value="NIP7"/>
</dbReference>
<dbReference type="eggNOG" id="KOG3492">
    <property type="taxonomic scope" value="Eukaryota"/>
</dbReference>
<dbReference type="GeneTree" id="ENSGT00950000182971"/>
<dbReference type="HOGENOM" id="CLU_097217_0_0_1"/>
<dbReference type="InParanoid" id="Q56P27"/>
<dbReference type="OMA" id="LISMGTC"/>
<dbReference type="OrthoDB" id="27490at2759"/>
<dbReference type="TreeFam" id="TF300081"/>
<dbReference type="Reactome" id="R-SSC-6791226">
    <property type="pathway name" value="Major pathway of rRNA processing in the nucleolus and cytosol"/>
</dbReference>
<dbReference type="Proteomes" id="UP000008227">
    <property type="component" value="Chromosome 6"/>
</dbReference>
<dbReference type="Proteomes" id="UP000314985">
    <property type="component" value="Chromosome 6"/>
</dbReference>
<dbReference type="Proteomes" id="UP000694570">
    <property type="component" value="Unplaced"/>
</dbReference>
<dbReference type="Proteomes" id="UP000694571">
    <property type="component" value="Unplaced"/>
</dbReference>
<dbReference type="Proteomes" id="UP000694720">
    <property type="component" value="Unplaced"/>
</dbReference>
<dbReference type="Proteomes" id="UP000694722">
    <property type="component" value="Unplaced"/>
</dbReference>
<dbReference type="Proteomes" id="UP000694723">
    <property type="component" value="Unplaced"/>
</dbReference>
<dbReference type="Proteomes" id="UP000694724">
    <property type="component" value="Unplaced"/>
</dbReference>
<dbReference type="Proteomes" id="UP000694725">
    <property type="component" value="Unplaced"/>
</dbReference>
<dbReference type="Proteomes" id="UP000694726">
    <property type="component" value="Unplaced"/>
</dbReference>
<dbReference type="Proteomes" id="UP000694727">
    <property type="component" value="Unplaced"/>
</dbReference>
<dbReference type="Proteomes" id="UP000694728">
    <property type="component" value="Unplaced"/>
</dbReference>
<dbReference type="Bgee" id="ENSSSCG00000033741">
    <property type="expression patterns" value="Expressed in hindlimb bud and 44 other cell types or tissues"/>
</dbReference>
<dbReference type="ExpressionAtlas" id="Q56P27">
    <property type="expression patterns" value="baseline"/>
</dbReference>
<dbReference type="GO" id="GO:0005829">
    <property type="term" value="C:cytosol"/>
    <property type="evidence" value="ECO:0007669"/>
    <property type="project" value="Ensembl"/>
</dbReference>
<dbReference type="GO" id="GO:0005730">
    <property type="term" value="C:nucleolus"/>
    <property type="evidence" value="ECO:0000318"/>
    <property type="project" value="GO_Central"/>
</dbReference>
<dbReference type="GO" id="GO:0005654">
    <property type="term" value="C:nucleoplasm"/>
    <property type="evidence" value="ECO:0007669"/>
    <property type="project" value="Ensembl"/>
</dbReference>
<dbReference type="GO" id="GO:0030687">
    <property type="term" value="C:preribosome, large subunit precursor"/>
    <property type="evidence" value="ECO:0000318"/>
    <property type="project" value="GO_Central"/>
</dbReference>
<dbReference type="GO" id="GO:0003723">
    <property type="term" value="F:RNA binding"/>
    <property type="evidence" value="ECO:0007669"/>
    <property type="project" value="UniProtKB-KW"/>
</dbReference>
<dbReference type="GO" id="GO:0042273">
    <property type="term" value="P:ribosomal large subunit biogenesis"/>
    <property type="evidence" value="ECO:0000318"/>
    <property type="project" value="GO_Central"/>
</dbReference>
<dbReference type="GO" id="GO:0042255">
    <property type="term" value="P:ribosome assembly"/>
    <property type="evidence" value="ECO:0007669"/>
    <property type="project" value="InterPro"/>
</dbReference>
<dbReference type="CDD" id="cd21146">
    <property type="entry name" value="Nip7_N_euk"/>
    <property type="match status" value="1"/>
</dbReference>
<dbReference type="CDD" id="cd21151">
    <property type="entry name" value="PUA_Nip7-like"/>
    <property type="match status" value="1"/>
</dbReference>
<dbReference type="FunFam" id="2.30.130.10:FF:000002">
    <property type="entry name" value="60S ribosome subunit biogenesis protein NIP7 homolog"/>
    <property type="match status" value="1"/>
</dbReference>
<dbReference type="FunFam" id="3.10.450.220:FF:000001">
    <property type="entry name" value="60S ribosome subunit biogenesis protein NIP7 homolog"/>
    <property type="match status" value="1"/>
</dbReference>
<dbReference type="Gene3D" id="3.10.450.220">
    <property type="match status" value="1"/>
</dbReference>
<dbReference type="Gene3D" id="2.30.130.10">
    <property type="entry name" value="PUA domain"/>
    <property type="match status" value="1"/>
</dbReference>
<dbReference type="InterPro" id="IPR040598">
    <property type="entry name" value="NIP7_N"/>
</dbReference>
<dbReference type="InterPro" id="IPR055359">
    <property type="entry name" value="Nip7_N_euk"/>
</dbReference>
<dbReference type="InterPro" id="IPR002478">
    <property type="entry name" value="PUA"/>
</dbReference>
<dbReference type="InterPro" id="IPR015947">
    <property type="entry name" value="PUA-like_sf"/>
</dbReference>
<dbReference type="InterPro" id="IPR036974">
    <property type="entry name" value="PUA_sf"/>
</dbReference>
<dbReference type="InterPro" id="IPR016686">
    <property type="entry name" value="Ribosomal_synth_fac_NIP7"/>
</dbReference>
<dbReference type="InterPro" id="IPR005155">
    <property type="entry name" value="UPF0113_PUA"/>
</dbReference>
<dbReference type="PANTHER" id="PTHR23415">
    <property type="entry name" value="CYCLIN-DEPENDENT KINASES REGULATORY SUBUNIT/60S RIBOSOME SUBUNIT BIOGENESIS PROTEIN NIP7"/>
    <property type="match status" value="1"/>
</dbReference>
<dbReference type="Pfam" id="PF17833">
    <property type="entry name" value="pre-PUA_NIP7"/>
    <property type="match status" value="1"/>
</dbReference>
<dbReference type="Pfam" id="PF03657">
    <property type="entry name" value="UPF0113"/>
    <property type="match status" value="1"/>
</dbReference>
<dbReference type="PIRSF" id="PIRSF017190">
    <property type="entry name" value="Rbsml_synth_fac_NIP7"/>
    <property type="match status" value="1"/>
</dbReference>
<dbReference type="SMART" id="SM00359">
    <property type="entry name" value="PUA"/>
    <property type="match status" value="1"/>
</dbReference>
<dbReference type="SUPFAM" id="SSF88802">
    <property type="entry name" value="Pre-PUA domain"/>
    <property type="match status" value="1"/>
</dbReference>
<dbReference type="SUPFAM" id="SSF88697">
    <property type="entry name" value="PUA domain-like"/>
    <property type="match status" value="1"/>
</dbReference>
<dbReference type="PROSITE" id="PS50890">
    <property type="entry name" value="PUA"/>
    <property type="match status" value="1"/>
</dbReference>
<evidence type="ECO:0000250" key="1"/>
<evidence type="ECO:0000250" key="2">
    <source>
        <dbReference type="UniProtKB" id="Q9Y221"/>
    </source>
</evidence>
<evidence type="ECO:0000255" key="3">
    <source>
        <dbReference type="PROSITE-ProRule" id="PRU00161"/>
    </source>
</evidence>
<evidence type="ECO:0000269" key="4">
    <source>
    </source>
</evidence>
<evidence type="ECO:0000305" key="5"/>
<keyword id="KW-0539">Nucleus</keyword>
<keyword id="KW-1185">Reference proteome</keyword>
<keyword id="KW-0690">Ribosome biogenesis</keyword>
<keyword id="KW-0694">RNA-binding</keyword>
<sequence>MRPLTEEETRVMFEKIAKYIGENLQLLVDRPDGTYCFRLHNDRVYYVSEKILKLAANISGDKLMSLGTCFGKFTKTHKFRLHITALDYLAPYAKYKVWIKPGAEQSFLYGNHVLKSGLGRITENTSQYQGVVVYSMADIPLGFGVAAKSTQDCRKVDPMAIVVFHQADIGEYVRHEETLT</sequence>
<gene>
    <name type="primary">NIP7</name>
</gene>
<accession>Q56P27</accession>
<accession>Q52QS1</accession>
<name>NIP7_PIG</name>
<feature type="chain" id="PRO_0000250210" description="60S ribosome subunit biogenesis protein NIP7 homolog">
    <location>
        <begin position="1"/>
        <end position="180"/>
    </location>
</feature>
<feature type="domain" description="PUA" evidence="3">
    <location>
        <begin position="94"/>
        <end position="170"/>
    </location>
</feature>
<feature type="region of interest" description="N-terminal domain" evidence="1">
    <location>
        <begin position="1"/>
        <end position="92"/>
    </location>
</feature>
<feature type="region of interest" description="C-terminal domain" evidence="1">
    <location>
        <begin position="93"/>
        <end position="180"/>
    </location>
</feature>
<feature type="sequence conflict" description="In Ref. 1; AAX85685." evidence="5" ref="1">
    <original>G</original>
    <variation>D</variation>
    <location>
        <position position="33"/>
    </location>
</feature>
<protein>
    <recommendedName>
        <fullName>60S ribosome subunit biogenesis protein NIP7 homolog</fullName>
    </recommendedName>
    <alternativeName>
        <fullName>Nucleolar pre-rRNA processing protein NIP7</fullName>
    </alternativeName>
</protein>
<comment type="function">
    <text evidence="1">Required for proper 34S pre-rRNA processing and 60S ribosome subunit assembly.</text>
</comment>
<comment type="subunit">
    <text evidence="2">Monomer. Interacts with pre-ribosome complex. May bind to RNA. Interacts with NOL8. Interacts with FTSJ3 (By similarity). Interacts with DDX24 (By similarity).</text>
</comment>
<comment type="subcellular location">
    <subcellularLocation>
        <location evidence="1">Nucleus</location>
        <location evidence="1">Nucleolus</location>
    </subcellularLocation>
</comment>
<comment type="tissue specificity">
    <text evidence="4">Expressed in muscle, heart, liver, fat, kidney and lung. Weakly expressed in small intestine, ovary and spleen.</text>
</comment>
<comment type="similarity">
    <text evidence="5">Belongs to the NIP7 family.</text>
</comment>
<organism>
    <name type="scientific">Sus scrofa</name>
    <name type="common">Pig</name>
    <dbReference type="NCBI Taxonomy" id="9823"/>
    <lineage>
        <taxon>Eukaryota</taxon>
        <taxon>Metazoa</taxon>
        <taxon>Chordata</taxon>
        <taxon>Craniata</taxon>
        <taxon>Vertebrata</taxon>
        <taxon>Euteleostomi</taxon>
        <taxon>Mammalia</taxon>
        <taxon>Eutheria</taxon>
        <taxon>Laurasiatheria</taxon>
        <taxon>Artiodactyla</taxon>
        <taxon>Suina</taxon>
        <taxon>Suidae</taxon>
        <taxon>Sus</taxon>
    </lineage>
</organism>